<dbReference type="EMBL" id="AY014997">
    <property type="protein sequence ID" value="AAK01468.1"/>
    <property type="molecule type" value="mRNA"/>
</dbReference>
<dbReference type="EMBL" id="BC057562">
    <property type="protein sequence ID" value="AAH57562.1"/>
    <property type="molecule type" value="mRNA"/>
</dbReference>
<dbReference type="CCDS" id="CCDS37123.1"/>
<dbReference type="RefSeq" id="NP_570963.1">
    <property type="nucleotide sequence ID" value="NM_130893.3"/>
</dbReference>
<dbReference type="SMR" id="Q99M85"/>
<dbReference type="FunCoup" id="Q99M85">
    <property type="interactions" value="946"/>
</dbReference>
<dbReference type="STRING" id="10090.ENSMUSP00000094093"/>
<dbReference type="GlyGen" id="Q99M85">
    <property type="glycosylation" value="2 sites"/>
</dbReference>
<dbReference type="iPTMnet" id="Q99M85"/>
<dbReference type="PhosphoSitePlus" id="Q99M85"/>
<dbReference type="PaxDb" id="10090-ENSMUSP00000094093"/>
<dbReference type="ProteomicsDB" id="256939"/>
<dbReference type="Antibodypedia" id="59727">
    <property type="antibodies" value="29 antibodies from 13 providers"/>
</dbReference>
<dbReference type="DNASU" id="170729"/>
<dbReference type="Ensembl" id="ENSMUST00000096365.5">
    <property type="protein sequence ID" value="ENSMUSP00000094093.4"/>
    <property type="gene ID" value="ENSMUSG00000048385.11"/>
</dbReference>
<dbReference type="GeneID" id="170729"/>
<dbReference type="KEGG" id="mmu:170729"/>
<dbReference type="UCSC" id="uc007wko.1">
    <property type="organism name" value="mouse"/>
</dbReference>
<dbReference type="AGR" id="MGI:2176606"/>
<dbReference type="CTD" id="83482"/>
<dbReference type="MGI" id="MGI:2176606">
    <property type="gene designation" value="Scrt1"/>
</dbReference>
<dbReference type="VEuPathDB" id="HostDB:ENSMUSG00000048385"/>
<dbReference type="eggNOG" id="KOG2462">
    <property type="taxonomic scope" value="Eukaryota"/>
</dbReference>
<dbReference type="GeneTree" id="ENSGT00940000154491"/>
<dbReference type="HOGENOM" id="CLU_002678_42_3_1"/>
<dbReference type="InParanoid" id="Q99M85"/>
<dbReference type="OMA" id="RCHKAFA"/>
<dbReference type="OrthoDB" id="5428132at2759"/>
<dbReference type="PhylomeDB" id="Q99M85"/>
<dbReference type="TreeFam" id="TF315515"/>
<dbReference type="BioGRID-ORCS" id="170729">
    <property type="hits" value="0 hits in 78 CRISPR screens"/>
</dbReference>
<dbReference type="ChiTaRS" id="Scrt1">
    <property type="organism name" value="mouse"/>
</dbReference>
<dbReference type="PRO" id="PR:Q99M85"/>
<dbReference type="Proteomes" id="UP000000589">
    <property type="component" value="Chromosome 15"/>
</dbReference>
<dbReference type="RNAct" id="Q99M85">
    <property type="molecule type" value="protein"/>
</dbReference>
<dbReference type="Bgee" id="ENSMUSG00000048385">
    <property type="expression patterns" value="Expressed in cerebellar cortex and 90 other cell types or tissues"/>
</dbReference>
<dbReference type="GO" id="GO:0016604">
    <property type="term" value="C:nuclear body"/>
    <property type="evidence" value="ECO:0007669"/>
    <property type="project" value="Ensembl"/>
</dbReference>
<dbReference type="GO" id="GO:0005634">
    <property type="term" value="C:nucleus"/>
    <property type="evidence" value="ECO:0000314"/>
    <property type="project" value="MGI"/>
</dbReference>
<dbReference type="GO" id="GO:0001227">
    <property type="term" value="F:DNA-binding transcription repressor activity, RNA polymerase II-specific"/>
    <property type="evidence" value="ECO:0007669"/>
    <property type="project" value="Ensembl"/>
</dbReference>
<dbReference type="GO" id="GO:0000977">
    <property type="term" value="F:RNA polymerase II transcription regulatory region sequence-specific DNA binding"/>
    <property type="evidence" value="ECO:0007669"/>
    <property type="project" value="Ensembl"/>
</dbReference>
<dbReference type="GO" id="GO:0008270">
    <property type="term" value="F:zinc ion binding"/>
    <property type="evidence" value="ECO:0007669"/>
    <property type="project" value="UniProtKB-KW"/>
</dbReference>
<dbReference type="GO" id="GO:0000122">
    <property type="term" value="P:negative regulation of transcription by RNA polymerase II"/>
    <property type="evidence" value="ECO:0000314"/>
    <property type="project" value="MGI"/>
</dbReference>
<dbReference type="GO" id="GO:2001222">
    <property type="term" value="P:regulation of neuron migration"/>
    <property type="evidence" value="ECO:0000315"/>
    <property type="project" value="MGI"/>
</dbReference>
<dbReference type="FunFam" id="3.30.160.60:FF:000560">
    <property type="entry name" value="Scratch family transcriptional repressor 1"/>
    <property type="match status" value="1"/>
</dbReference>
<dbReference type="FunFam" id="3.30.160.60:FF:000043">
    <property type="entry name" value="Scratch family zinc finger 2"/>
    <property type="match status" value="1"/>
</dbReference>
<dbReference type="FunFam" id="3.30.160.60:FF:000169">
    <property type="entry name" value="transcriptional repressor scratch 2"/>
    <property type="match status" value="1"/>
</dbReference>
<dbReference type="FunFam" id="3.30.160.60:FF:000207">
    <property type="entry name" value="zinc finger protein SNAI2"/>
    <property type="match status" value="1"/>
</dbReference>
<dbReference type="Gene3D" id="3.30.160.60">
    <property type="entry name" value="Classic Zinc Finger"/>
    <property type="match status" value="4"/>
</dbReference>
<dbReference type="InterPro" id="IPR050527">
    <property type="entry name" value="Snail/Krueppel_Znf"/>
</dbReference>
<dbReference type="InterPro" id="IPR036236">
    <property type="entry name" value="Znf_C2H2_sf"/>
</dbReference>
<dbReference type="InterPro" id="IPR013087">
    <property type="entry name" value="Znf_C2H2_type"/>
</dbReference>
<dbReference type="PANTHER" id="PTHR24388:SF60">
    <property type="entry name" value="TRANSCRIPTIONAL REPRESSOR SCRATCH 1"/>
    <property type="match status" value="1"/>
</dbReference>
<dbReference type="PANTHER" id="PTHR24388">
    <property type="entry name" value="ZINC FINGER PROTEIN"/>
    <property type="match status" value="1"/>
</dbReference>
<dbReference type="Pfam" id="PF00096">
    <property type="entry name" value="zf-C2H2"/>
    <property type="match status" value="4"/>
</dbReference>
<dbReference type="Pfam" id="PF13912">
    <property type="entry name" value="zf-C2H2_6"/>
    <property type="match status" value="1"/>
</dbReference>
<dbReference type="SMART" id="SM00355">
    <property type="entry name" value="ZnF_C2H2"/>
    <property type="match status" value="5"/>
</dbReference>
<dbReference type="SUPFAM" id="SSF57667">
    <property type="entry name" value="beta-beta-alpha zinc fingers"/>
    <property type="match status" value="3"/>
</dbReference>
<dbReference type="PROSITE" id="PS00028">
    <property type="entry name" value="ZINC_FINGER_C2H2_1"/>
    <property type="match status" value="4"/>
</dbReference>
<dbReference type="PROSITE" id="PS50157">
    <property type="entry name" value="ZINC_FINGER_C2H2_2"/>
    <property type="match status" value="4"/>
</dbReference>
<keyword id="KW-0238">DNA-binding</keyword>
<keyword id="KW-0479">Metal-binding</keyword>
<keyword id="KW-0539">Nucleus</keyword>
<keyword id="KW-1185">Reference proteome</keyword>
<keyword id="KW-0677">Repeat</keyword>
<keyword id="KW-0678">Repressor</keyword>
<keyword id="KW-0804">Transcription</keyword>
<keyword id="KW-0805">Transcription regulation</keyword>
<keyword id="KW-0862">Zinc</keyword>
<keyword id="KW-0863">Zinc-finger</keyword>
<gene>
    <name type="primary">Scrt1</name>
</gene>
<name>SCRT1_MOUSE</name>
<reference key="1">
    <citation type="journal article" date="2001" name="Proc. Natl. Acad. Sci. U.S.A.">
        <title>Mammalian scratch: a neural-specific snail family transcriptional repressor.</title>
        <authorList>
            <person name="Nakakura E.K."/>
            <person name="Watkins D.N."/>
            <person name="Schuebel K.E."/>
            <person name="Sriuranpong V."/>
            <person name="Borges M.W."/>
            <person name="Nelkin B.D."/>
            <person name="Ball D.W."/>
        </authorList>
    </citation>
    <scope>NUCLEOTIDE SEQUENCE [MRNA]</scope>
    <scope>DEVELOPMENTAL STAGE</scope>
    <source>
        <strain>BALB/cJ</strain>
        <tissue>Brain</tissue>
    </source>
</reference>
<reference key="2">
    <citation type="journal article" date="2004" name="Genome Res.">
        <title>The status, quality, and expansion of the NIH full-length cDNA project: the Mammalian Gene Collection (MGC).</title>
        <authorList>
            <consortium name="The MGC Project Team"/>
        </authorList>
    </citation>
    <scope>NUCLEOTIDE SEQUENCE [LARGE SCALE MRNA]</scope>
    <source>
        <strain>C57BL/6J</strain>
        <tissue>Fetal brain</tissue>
    </source>
</reference>
<reference key="3">
    <citation type="journal article" date="2001" name="Brain Res. Mol. Brain Res.">
        <title>Mammalian scratch participates in neuronal differentiation in P19 embryonal carcinoma cells.</title>
        <authorList>
            <person name="Nakakura E.K."/>
            <person name="Watkins D.N."/>
            <person name="Sriuranpong V."/>
            <person name="Borges M.W."/>
            <person name="Nelkin B.D."/>
            <person name="Ball D.W."/>
        </authorList>
    </citation>
    <scope>FUNCTION</scope>
</reference>
<reference key="4">
    <citation type="journal article" date="2008" name="Dev. Cell">
        <title>Ajuba LIM proteins are snail/slug corepressors required for neural crest development in Xenopus.</title>
        <authorList>
            <person name="Langer E.M."/>
            <person name="Feng Y."/>
            <person name="Zhaoyuan H."/>
            <person name="Rauscher F.J. III"/>
            <person name="Kroll K.L."/>
            <person name="Longmore G.D."/>
        </authorList>
    </citation>
    <scope>INTERACTION WITH LIMD1; WTIP AND AJUBA</scope>
</reference>
<feature type="chain" id="PRO_0000047037" description="Transcriptional repressor scratch 1">
    <location>
        <begin position="1"/>
        <end position="348"/>
    </location>
</feature>
<feature type="zinc finger region" description="C2H2-type 1" evidence="2">
    <location>
        <begin position="191"/>
        <end position="213"/>
    </location>
</feature>
<feature type="zinc finger region" description="C2H2-type 2" evidence="2">
    <location>
        <begin position="222"/>
        <end position="244"/>
    </location>
</feature>
<feature type="zinc finger region" description="C2H2-type 3" evidence="2">
    <location>
        <begin position="248"/>
        <end position="270"/>
    </location>
</feature>
<feature type="zinc finger region" description="C2H2-type 4" evidence="2">
    <location>
        <begin position="276"/>
        <end position="298"/>
    </location>
</feature>
<feature type="zinc finger region" description="C2H2-type 5; atypical" evidence="2">
    <location>
        <begin position="304"/>
        <end position="327"/>
    </location>
</feature>
<feature type="region of interest" description="SNAG domain" evidence="1">
    <location>
        <begin position="1"/>
        <end position="20"/>
    </location>
</feature>
<feature type="region of interest" description="Disordered" evidence="3">
    <location>
        <begin position="130"/>
        <end position="190"/>
    </location>
</feature>
<feature type="compositionally biased region" description="Low complexity" evidence="3">
    <location>
        <begin position="130"/>
        <end position="148"/>
    </location>
</feature>
<feature type="compositionally biased region" description="Gly residues" evidence="3">
    <location>
        <begin position="149"/>
        <end position="162"/>
    </location>
</feature>
<feature type="compositionally biased region" description="Low complexity" evidence="3">
    <location>
        <begin position="163"/>
        <end position="182"/>
    </location>
</feature>
<sequence length="348" mass="35919">MPRSFLVKKVKLDTFSSADLDSSYGRARSDLGVRLQDKGYLSDYVGPASVYDGDAEAALLKGPSPEPMYAAAVRGELGPAASGSAPPPTPRPELATAAGGYINGDAAVSEGYAADAFFITDGRSRRKAANANAAAAPSTASVAAPDSDAGGGGGPGTRGSGSGSASRGGTRVGAGTEARAGSGATGAGGRHACGECGKTYATSSNLSRHKQTHRSLDSQLARRCPTCGKVYVSMPAMAMHLLTHDLRHKCGVCGKAFSRPWLLQGHMRSHTGEKPFGCAHCGKAFADRSNLRAHMQTHSAFKHFQCKRCKKSFALKSYLNKHYESACFKGGASGPATPAPPQLSPVQA</sequence>
<protein>
    <recommendedName>
        <fullName>Transcriptional repressor scratch 1</fullName>
    </recommendedName>
    <alternativeName>
        <fullName>Scratch homolog 1 zinc finger protein</fullName>
        <shortName>SCRT</shortName>
        <shortName>Scratch 1</shortName>
        <shortName>mScrt</shortName>
    </alternativeName>
</protein>
<proteinExistence type="evidence at protein level"/>
<accession>Q99M85</accession>
<evidence type="ECO:0000250" key="1"/>
<evidence type="ECO:0000255" key="2">
    <source>
        <dbReference type="PROSITE-ProRule" id="PRU00042"/>
    </source>
</evidence>
<evidence type="ECO:0000256" key="3">
    <source>
        <dbReference type="SAM" id="MobiDB-lite"/>
    </source>
</evidence>
<evidence type="ECO:0000269" key="4">
    <source>
    </source>
</evidence>
<evidence type="ECO:0000269" key="5">
    <source>
    </source>
</evidence>
<evidence type="ECO:0000269" key="6">
    <source>
    </source>
</evidence>
<evidence type="ECO:0000305" key="7"/>
<organism>
    <name type="scientific">Mus musculus</name>
    <name type="common">Mouse</name>
    <dbReference type="NCBI Taxonomy" id="10090"/>
    <lineage>
        <taxon>Eukaryota</taxon>
        <taxon>Metazoa</taxon>
        <taxon>Chordata</taxon>
        <taxon>Craniata</taxon>
        <taxon>Vertebrata</taxon>
        <taxon>Euteleostomi</taxon>
        <taxon>Mammalia</taxon>
        <taxon>Eutheria</taxon>
        <taxon>Euarchontoglires</taxon>
        <taxon>Glires</taxon>
        <taxon>Rodentia</taxon>
        <taxon>Myomorpha</taxon>
        <taxon>Muroidea</taxon>
        <taxon>Muridae</taxon>
        <taxon>Murinae</taxon>
        <taxon>Mus</taxon>
        <taxon>Mus</taxon>
    </lineage>
</organism>
<comment type="function">
    <text evidence="1 5">Transcriptional repressor that binds E-box motif CAGGTG (By similarity). Appears to function downstream of proneural bHLH proteins in promoting neural differentiation.</text>
</comment>
<comment type="subunit">
    <text evidence="6">Interacts (via SNAG domain) with LIMD1 (via LIM domains), WTIP (via LIM domains) and AJUBA (via LIM domains).</text>
</comment>
<comment type="subcellular location">
    <subcellularLocation>
        <location evidence="1">Nucleus</location>
    </subcellularLocation>
</comment>
<comment type="developmental stage">
    <text evidence="4">Detected throughout the spinal cord except in the ventricular zone surrounding the central canal, which contains proliferating neurons, and dorsal root ganglia at 11.5 dpc. At 12.5 dpc, detected in the telencephalon, and by 14.5 dpc a distinct laminar pattern of expression was seen in regions adjacent to the ventricular zone. In the developing eye, expression was detected in the inner nuclear layer of the retina beginning at 13.5 dpc.</text>
</comment>
<comment type="domain">
    <text evidence="1">The N-terminal non zinc-finger region mediates the repressor activity.</text>
</comment>
<comment type="similarity">
    <text evidence="7">Belongs to the snail C2H2-type zinc-finger protein family.</text>
</comment>